<proteinExistence type="inferred from homology"/>
<feature type="chain" id="PRO_0000199195" description="R-phycoerythrin beta chain">
    <location>
        <begin position="1"/>
        <end position="177"/>
    </location>
</feature>
<feature type="binding site" description="covalent" evidence="1">
    <location>
        <position position="50"/>
    </location>
    <ligand>
        <name>phycourobilin</name>
        <dbReference type="ChEBI" id="CHEBI:189062"/>
    </ligand>
</feature>
<feature type="binding site" description="covalent" evidence="1">
    <location>
        <position position="61"/>
    </location>
    <ligand>
        <name>phycourobilin</name>
        <dbReference type="ChEBI" id="CHEBI:189062"/>
    </ligand>
</feature>
<feature type="binding site" description="covalent" evidence="1">
    <location>
        <position position="82"/>
    </location>
    <ligand>
        <name>(2R,3E)-phycoerythrobilin</name>
        <dbReference type="ChEBI" id="CHEBI:85276"/>
        <label>1</label>
    </ligand>
</feature>
<feature type="binding site" description="covalent" evidence="1">
    <location>
        <position position="158"/>
    </location>
    <ligand>
        <name>(2R,3E)-phycoerythrobilin</name>
        <dbReference type="ChEBI" id="CHEBI:85276"/>
        <label>2</label>
    </ligand>
</feature>
<feature type="modified residue" description="N4-methylasparagine" evidence="1">
    <location>
        <position position="72"/>
    </location>
</feature>
<keyword id="KW-0042">Antenna complex</keyword>
<keyword id="KW-0089">Bile pigment</keyword>
<keyword id="KW-0150">Chloroplast</keyword>
<keyword id="KW-0157">Chromophore</keyword>
<keyword id="KW-0249">Electron transport</keyword>
<keyword id="KW-0472">Membrane</keyword>
<keyword id="KW-0488">Methylation</keyword>
<keyword id="KW-0602">Photosynthesis</keyword>
<keyword id="KW-0605">Phycobilisome</keyword>
<keyword id="KW-0934">Plastid</keyword>
<keyword id="KW-0793">Thylakoid</keyword>
<keyword id="KW-0813">Transport</keyword>
<geneLocation type="chloroplast"/>
<accession>P51367</accession>
<gene>
    <name type="primary">cpeB</name>
</gene>
<evidence type="ECO:0000250" key="1"/>
<evidence type="ECO:0000305" key="2"/>
<sequence>MLDAFSRVVVNSDAKAAYVGGSDLQALKKFIADGNKRLDSVNAIVSNASCIVSDAVSGMICENPGLIAPGGNCYTNRRMAACLRDGEIILRYVSYALLAGDPSVLEDRCLNGLKETYIALGVPTNSSVRAVSIMKASAVAFITNTASQRKMATADGDCSALASEVASYCDRVAAAIS</sequence>
<organism>
    <name type="scientific">Porphyra purpurea</name>
    <name type="common">Red seaweed</name>
    <name type="synonym">Ulva purpurea</name>
    <dbReference type="NCBI Taxonomy" id="2787"/>
    <lineage>
        <taxon>Eukaryota</taxon>
        <taxon>Rhodophyta</taxon>
        <taxon>Bangiophyceae</taxon>
        <taxon>Bangiales</taxon>
        <taxon>Bangiaceae</taxon>
        <taxon>Porphyra</taxon>
    </lineage>
</organism>
<comment type="function">
    <text evidence="1">Light-harvesting photosynthetic bile pigment-protein from the phycobiliprotein complex.</text>
</comment>
<comment type="subunit">
    <text evidence="1">Heterodimer of an alpha and a beta chain.</text>
</comment>
<comment type="subcellular location">
    <subcellularLocation>
        <location evidence="1">Plastid</location>
        <location evidence="1">Chloroplast thylakoid membrane</location>
        <topology evidence="1">Peripheral membrane protein</topology>
        <orientation evidence="1">Stromal side</orientation>
    </subcellularLocation>
    <text evidence="1">Forms the periphery of the phycobilisome rod.</text>
</comment>
<comment type="PTM">
    <text evidence="1">Contains two covalently linked phycoerythrobilin chromophores and one covalently linked phycourobilin chromophore.</text>
</comment>
<comment type="similarity">
    <text evidence="2">Belongs to the phycobiliprotein family.</text>
</comment>
<reference key="1">
    <citation type="journal article" date="1995" name="Plant Mol. Biol. Rep.">
        <title>Complete nucleotide sequence of the Porphyra purpurea chloroplast genome.</title>
        <authorList>
            <person name="Reith M.E."/>
            <person name="Munholland J."/>
        </authorList>
    </citation>
    <scope>NUCLEOTIDE SEQUENCE [LARGE SCALE GENOMIC DNA]</scope>
    <source>
        <strain>Avonport</strain>
    </source>
</reference>
<name>PHEB_PORPU</name>
<protein>
    <recommendedName>
        <fullName>R-phycoerythrin beta chain</fullName>
    </recommendedName>
</protein>
<dbReference type="EMBL" id="U38804">
    <property type="protein sequence ID" value="AAC08253.1"/>
    <property type="molecule type" value="Genomic_DNA"/>
</dbReference>
<dbReference type="PIR" id="S73288">
    <property type="entry name" value="S73288"/>
</dbReference>
<dbReference type="RefSeq" id="NP_053977.1">
    <property type="nucleotide sequence ID" value="NC_000925.1"/>
</dbReference>
<dbReference type="SMR" id="P51367"/>
<dbReference type="GeneID" id="810007"/>
<dbReference type="GO" id="GO:0009535">
    <property type="term" value="C:chloroplast thylakoid membrane"/>
    <property type="evidence" value="ECO:0007669"/>
    <property type="project" value="UniProtKB-SubCell"/>
</dbReference>
<dbReference type="GO" id="GO:0030089">
    <property type="term" value="C:phycobilisome"/>
    <property type="evidence" value="ECO:0007669"/>
    <property type="project" value="UniProtKB-KW"/>
</dbReference>
<dbReference type="GO" id="GO:0015979">
    <property type="term" value="P:photosynthesis"/>
    <property type="evidence" value="ECO:0007669"/>
    <property type="project" value="UniProtKB-KW"/>
</dbReference>
<dbReference type="CDD" id="cd14767">
    <property type="entry name" value="PE_beta-like"/>
    <property type="match status" value="1"/>
</dbReference>
<dbReference type="Gene3D" id="1.10.490.20">
    <property type="entry name" value="Phycocyanins"/>
    <property type="match status" value="1"/>
</dbReference>
<dbReference type="InterPro" id="IPR009050">
    <property type="entry name" value="Globin-like_sf"/>
</dbReference>
<dbReference type="InterPro" id="IPR012128">
    <property type="entry name" value="Phycobilisome_asu/bsu"/>
</dbReference>
<dbReference type="InterPro" id="IPR038719">
    <property type="entry name" value="Phycobilisome_asu/bsu_sf"/>
</dbReference>
<dbReference type="PANTHER" id="PTHR34011:SF7">
    <property type="entry name" value="C-PHYCOCYANIN BETA SUBUNIT"/>
    <property type="match status" value="1"/>
</dbReference>
<dbReference type="PANTHER" id="PTHR34011">
    <property type="entry name" value="PHYCOBILISOME 32.1 KDA LINKER POLYPEPTIDE, PHYCOCYANIN-ASSOCIATED, ROD 2-RELATED"/>
    <property type="match status" value="1"/>
</dbReference>
<dbReference type="Pfam" id="PF00502">
    <property type="entry name" value="Phycobilisome"/>
    <property type="match status" value="1"/>
</dbReference>
<dbReference type="PIRSF" id="PIRSF000081">
    <property type="entry name" value="Phycocyanin"/>
    <property type="match status" value="1"/>
</dbReference>
<dbReference type="SUPFAM" id="SSF46458">
    <property type="entry name" value="Globin-like"/>
    <property type="match status" value="1"/>
</dbReference>